<reference key="1">
    <citation type="journal article" date="1993" name="Mol. Microbiol.">
        <title>Cloning and molecular characterization of a gene involved in Salmonella adherence and invasion of cultured epithelial cells.</title>
        <authorList>
            <person name="Altmeyer R.M."/>
            <person name="McNern J.K."/>
            <person name="Bossio J.C."/>
            <person name="Rosenshine I."/>
            <person name="Finlay B.B."/>
            <person name="Galan J.E."/>
        </authorList>
    </citation>
    <scope>NUCLEOTIDE SEQUENCE [GENOMIC DNA]</scope>
    <scope>FUNCTION</scope>
    <source>
        <strain>SL2824</strain>
    </source>
</reference>
<reference key="2">
    <citation type="journal article" date="2005" name="Nucleic Acids Res.">
        <title>The genome sequence of Salmonella enterica serovar Choleraesuis, a highly invasive and resistant zoonotic pathogen.</title>
        <authorList>
            <person name="Chiu C.-H."/>
            <person name="Tang P."/>
            <person name="Chu C."/>
            <person name="Hu S."/>
            <person name="Bao Q."/>
            <person name="Yu J."/>
            <person name="Chou Y.-Y."/>
            <person name="Wang H.-S."/>
            <person name="Lee Y.-S."/>
        </authorList>
    </citation>
    <scope>NUCLEOTIDE SEQUENCE [LARGE SCALE GENOMIC DNA]</scope>
    <source>
        <strain>SC-B67</strain>
    </source>
</reference>
<protein>
    <recommendedName>
        <fullName evidence="5">SPI-1 type 3 secretion system pilotin</fullName>
    </recommendedName>
    <alternativeName>
        <fullName>Invasion lipoprotein InvH</fullName>
    </alternativeName>
</protein>
<accession>P37422</accession>
<accession>Q57KM4</accession>
<sequence>MKKFYSCLPVFLLIGCAQVPLPSSVSKPVQQPGAQQEQLANANSIDECQSLPYVPSDLAKNKSLSNQNADNSASKNSAISSSIFCEKYKQTKEQALTFFQEHPQYMRSKEDEEQLMTEFKKVLLEPGSKNLSIYQTLLSAHERLQAL</sequence>
<dbReference type="EMBL" id="Z17243">
    <property type="protein sequence ID" value="CAA78943.1"/>
    <property type="molecule type" value="Genomic_DNA"/>
</dbReference>
<dbReference type="EMBL" id="AE017220">
    <property type="protein sequence ID" value="AAX66738.1"/>
    <property type="molecule type" value="Genomic_DNA"/>
</dbReference>
<dbReference type="PIR" id="S28064">
    <property type="entry name" value="S28064"/>
</dbReference>
<dbReference type="RefSeq" id="WP_000715102.1">
    <property type="nucleotide sequence ID" value="NC_006905.1"/>
</dbReference>
<dbReference type="SMR" id="P37422"/>
<dbReference type="KEGG" id="sec:SCH_2832"/>
<dbReference type="HOGENOM" id="CLU_123343_0_0_6"/>
<dbReference type="Proteomes" id="UP000000538">
    <property type="component" value="Chromosome"/>
</dbReference>
<dbReference type="GO" id="GO:0009279">
    <property type="term" value="C:cell outer membrane"/>
    <property type="evidence" value="ECO:0007669"/>
    <property type="project" value="UniProtKB-SubCell"/>
</dbReference>
<dbReference type="InterPro" id="IPR006830">
    <property type="entry name" value="InvH"/>
</dbReference>
<dbReference type="NCBIfam" id="NF011869">
    <property type="entry name" value="PRK15341.1-2"/>
    <property type="match status" value="1"/>
</dbReference>
<dbReference type="Pfam" id="PF04741">
    <property type="entry name" value="InvH"/>
    <property type="match status" value="1"/>
</dbReference>
<dbReference type="PROSITE" id="PS51257">
    <property type="entry name" value="PROKAR_LIPOPROTEIN"/>
    <property type="match status" value="1"/>
</dbReference>
<organism>
    <name type="scientific">Salmonella choleraesuis (strain SC-B67)</name>
    <dbReference type="NCBI Taxonomy" id="321314"/>
    <lineage>
        <taxon>Bacteria</taxon>
        <taxon>Pseudomonadati</taxon>
        <taxon>Pseudomonadota</taxon>
        <taxon>Gammaproteobacteria</taxon>
        <taxon>Enterobacterales</taxon>
        <taxon>Enterobacteriaceae</taxon>
        <taxon>Salmonella</taxon>
    </lineage>
</organism>
<feature type="signal peptide" evidence="2">
    <location>
        <begin position="1"/>
        <end position="15"/>
    </location>
</feature>
<feature type="chain" id="PRO_0000021515" description="SPI-1 type 3 secretion system pilotin" evidence="2">
    <location>
        <begin position="16"/>
        <end position="147"/>
    </location>
</feature>
<feature type="lipid moiety-binding region" description="N-palmitoyl cysteine" evidence="2">
    <location>
        <position position="16"/>
    </location>
</feature>
<feature type="lipid moiety-binding region" description="S-diacylglycerol cysteine" evidence="2">
    <location>
        <position position="16"/>
    </location>
</feature>
<feature type="sequence conflict" description="In Ref. 1; CAA78943." evidence="5" ref="1">
    <original>Q</original>
    <variation>E</variation>
    <location>
        <position position="36"/>
    </location>
</feature>
<keyword id="KW-0998">Cell outer membrane</keyword>
<keyword id="KW-0449">Lipoprotein</keyword>
<keyword id="KW-0472">Membrane</keyword>
<keyword id="KW-0564">Palmitate</keyword>
<keyword id="KW-0732">Signal</keyword>
<keyword id="KW-0843">Virulence</keyword>
<name>SCTG_SALCH</name>
<evidence type="ECO:0000250" key="1">
    <source>
        <dbReference type="UniProtKB" id="P0CL43"/>
    </source>
</evidence>
<evidence type="ECO:0000255" key="2">
    <source>
        <dbReference type="PROSITE-ProRule" id="PRU00303"/>
    </source>
</evidence>
<evidence type="ECO:0000269" key="3">
    <source>
    </source>
</evidence>
<evidence type="ECO:0000303" key="4">
    <source>
    </source>
</evidence>
<evidence type="ECO:0000305" key="5"/>
<proteinExistence type="inferred from homology"/>
<comment type="function">
    <text evidence="1 3">Involved in the synthesis of the type III secretion system (T3SS), also called injectisome, which is used to inject bacterial effector proteins into eukaryotic host cells (By similarity). Pilot protein that is required for the proper localization of the secretin InvG/SctC in the outer membrane (By similarity). Necessary for efficient adherence and entry of these organisms into cultured epithelial cells (PubMed:8382333).</text>
</comment>
<comment type="subcellular location">
    <subcellularLocation>
        <location evidence="1">Cell outer membrane</location>
        <topology evidence="2">Lipid-anchor</topology>
    </subcellularLocation>
</comment>
<comment type="similarity">
    <text evidence="5">Belongs to the InvH family.</text>
</comment>
<gene>
    <name evidence="4" type="primary">invH</name>
    <name evidence="1" type="synonym">sctG</name>
    <name type="ordered locus">SCH_2832</name>
</gene>